<dbReference type="EMBL" id="AY035195">
    <property type="protein sequence ID" value="AAK61803.1"/>
    <property type="molecule type" value="Genomic_DNA"/>
</dbReference>
<dbReference type="RefSeq" id="YP_010526847.1">
    <property type="nucleotide sequence ID" value="NC_067714.1"/>
</dbReference>
<dbReference type="GeneID" id="76329217"/>
<dbReference type="GO" id="GO:0009507">
    <property type="term" value="C:chloroplast"/>
    <property type="evidence" value="ECO:0007669"/>
    <property type="project" value="UniProtKB-SubCell"/>
</dbReference>
<dbReference type="GO" id="GO:0003723">
    <property type="term" value="F:RNA binding"/>
    <property type="evidence" value="ECO:0007669"/>
    <property type="project" value="UniProtKB-KW"/>
</dbReference>
<dbReference type="GO" id="GO:0006397">
    <property type="term" value="P:mRNA processing"/>
    <property type="evidence" value="ECO:0007669"/>
    <property type="project" value="UniProtKB-KW"/>
</dbReference>
<dbReference type="GO" id="GO:0008380">
    <property type="term" value="P:RNA splicing"/>
    <property type="evidence" value="ECO:0007669"/>
    <property type="project" value="UniProtKB-UniRule"/>
</dbReference>
<dbReference type="GO" id="GO:0008033">
    <property type="term" value="P:tRNA processing"/>
    <property type="evidence" value="ECO:0007669"/>
    <property type="project" value="UniProtKB-KW"/>
</dbReference>
<dbReference type="HAMAP" id="MF_01390">
    <property type="entry name" value="MatK"/>
    <property type="match status" value="1"/>
</dbReference>
<dbReference type="InterPro" id="IPR024937">
    <property type="entry name" value="Domain_X"/>
</dbReference>
<dbReference type="InterPro" id="IPR002866">
    <property type="entry name" value="Maturase_MatK"/>
</dbReference>
<dbReference type="InterPro" id="IPR024942">
    <property type="entry name" value="Maturase_MatK_N"/>
</dbReference>
<dbReference type="PANTHER" id="PTHR34811">
    <property type="entry name" value="MATURASE K"/>
    <property type="match status" value="1"/>
</dbReference>
<dbReference type="PANTHER" id="PTHR34811:SF1">
    <property type="entry name" value="MATURASE K"/>
    <property type="match status" value="1"/>
</dbReference>
<dbReference type="Pfam" id="PF01348">
    <property type="entry name" value="Intron_maturas2"/>
    <property type="match status" value="1"/>
</dbReference>
<dbReference type="Pfam" id="PF01824">
    <property type="entry name" value="MatK_N"/>
    <property type="match status" value="1"/>
</dbReference>
<name>MATK_PICPU</name>
<proteinExistence type="inferred from homology"/>
<organism>
    <name type="scientific">Picea pungens</name>
    <name type="common">Colorado spruce</name>
    <name type="synonym">Picea parryana</name>
    <dbReference type="NCBI Taxonomy" id="3331"/>
    <lineage>
        <taxon>Eukaryota</taxon>
        <taxon>Viridiplantae</taxon>
        <taxon>Streptophyta</taxon>
        <taxon>Embryophyta</taxon>
        <taxon>Tracheophyta</taxon>
        <taxon>Spermatophyta</taxon>
        <taxon>Pinopsida</taxon>
        <taxon>Pinidae</taxon>
        <taxon>Conifers I</taxon>
        <taxon>Pinales</taxon>
        <taxon>Pinaceae</taxon>
        <taxon>Picea</taxon>
    </lineage>
</organism>
<gene>
    <name evidence="1" type="primary">matK</name>
</gene>
<comment type="function">
    <text evidence="1">Usually encoded in the trnK tRNA gene intron. Probably assists in splicing its own and other chloroplast group II introns.</text>
</comment>
<comment type="subcellular location">
    <subcellularLocation>
        <location>Plastid</location>
        <location>Chloroplast</location>
    </subcellularLocation>
</comment>
<comment type="similarity">
    <text evidence="1">Belongs to the intron maturase 2 family. MatK subfamily.</text>
</comment>
<accession>Q7HEK3</accession>
<protein>
    <recommendedName>
        <fullName evidence="1">Maturase K</fullName>
    </recommendedName>
    <alternativeName>
        <fullName evidence="1">Intron maturase</fullName>
    </alternativeName>
</protein>
<geneLocation type="chloroplast"/>
<reference key="1">
    <citation type="submission" date="2001-05" db="EMBL/GenBank/DDBJ databases">
        <title>Phylogenetic analysis of Picea species based on chloroplast and mitochondrial gene sequences.</title>
        <authorList>
            <person name="Germano J."/>
            <person name="Thorner A.R."/>
            <person name="Klein A.S."/>
        </authorList>
    </citation>
    <scope>NUCLEOTIDE SEQUENCE [GENOMIC DNA]</scope>
</reference>
<feature type="chain" id="PRO_0000143599" description="Maturase K">
    <location>
        <begin position="1"/>
        <end position="515"/>
    </location>
</feature>
<sequence length="515" mass="60892">MDEFHRYGKEDSSWQQCFLYPLFFQEDLYAISHDHYLDGSSSSEPMEHLSSNDQFSFLTVKRLIGQIRQQNHSIVLFVNCDPNPLVDRKKSSYSESVLEGLTLVLEVPFSIRSKYSVEGMNEWKSFRSIHSIFPFLEDKFPHSNYVSDTRIPYSIHPEILVRTFRRWIGDAPSLHPLRSILYEYRNSSESLQRSIIVVPKVNTRFFLFLWNNYVYECESILVSLLKRSSHSRSLSHGSFPQRTHFHRKIKNIFLFSRRNSFQSIWSLKDPNIHYVRYGERSIIAIKGTHLLVKKYRYYLPIFRQCYFHLWNEPYRVCSHQLSKNCSSSLGYFLRVRMKPLLVKTKMLDELFIADLITDEFDPIVPIVPIIGLLSREKFCDISGRPISKLSWTSLTDDDILDRFDRIWRNLFHYYSGSFGRDGLYRIKYILSLSCAKTLACKHKSTIRVVRKELGPELFKKSFSKERELDSPPFSSKAAARSQRERIWHSDIPQINPLAHSWQKIQDLKIENLFDQ</sequence>
<keyword id="KW-0150">Chloroplast</keyword>
<keyword id="KW-0507">mRNA processing</keyword>
<keyword id="KW-0934">Plastid</keyword>
<keyword id="KW-0694">RNA-binding</keyword>
<keyword id="KW-0819">tRNA processing</keyword>
<evidence type="ECO:0000255" key="1">
    <source>
        <dbReference type="HAMAP-Rule" id="MF_01390"/>
    </source>
</evidence>